<reference key="1">
    <citation type="journal article" date="1994" name="Curr. Top. Microbiol. Immunol.">
        <title>Primer-directed sequencing of human papillomavirus types.</title>
        <authorList>
            <person name="Delius H."/>
            <person name="Hofmann B."/>
        </authorList>
    </citation>
    <scope>NUCLEOTIDE SEQUENCE [GENOMIC DNA]</scope>
</reference>
<reference key="2">
    <citation type="journal article" date="1992" name="J. Virol.">
        <title>Phylogenetic analysis of 48 papillomavirus types and 28 subtypes and variants: a showcase for the molecular evolution of DNA viruses.</title>
        <authorList>
            <person name="Chan S.-Y."/>
            <person name="Bernard H.U."/>
            <person name="Ong C.K."/>
            <person name="Chan S.P."/>
            <person name="Birgit H."/>
            <person name="Delius H."/>
        </authorList>
    </citation>
    <scope>NUCLEOTIDE SEQUENCE [GENOMIC DNA] OF 333-376</scope>
</reference>
<accession>Q05138</accession>
<proteinExistence type="evidence at protein level"/>
<dbReference type="EMBL" id="X74481">
    <property type="protein sequence ID" value="CAA52590.1"/>
    <property type="molecule type" value="Genomic_DNA"/>
</dbReference>
<dbReference type="EMBL" id="M96297">
    <property type="protein sequence ID" value="AAA47036.1"/>
    <property type="molecule type" value="Genomic_DNA"/>
</dbReference>
<dbReference type="PIR" id="S36578">
    <property type="entry name" value="S36578"/>
</dbReference>
<dbReference type="PDB" id="6IGF">
    <property type="method" value="X-ray"/>
    <property type="resolution" value="2.75 A"/>
    <property type="chains" value="A/B/C/D/E/F/G/H/I/J=1-529"/>
</dbReference>
<dbReference type="PDBsum" id="6IGF"/>
<dbReference type="SMR" id="Q05138"/>
<dbReference type="Proteomes" id="UP000008692">
    <property type="component" value="Genome"/>
</dbReference>
<dbReference type="GO" id="GO:0042025">
    <property type="term" value="C:host cell nucleus"/>
    <property type="evidence" value="ECO:0007669"/>
    <property type="project" value="UniProtKB-SubCell"/>
</dbReference>
<dbReference type="GO" id="GO:0039620">
    <property type="term" value="C:T=7 icosahedral viral capsid"/>
    <property type="evidence" value="ECO:0007669"/>
    <property type="project" value="UniProtKB-UniRule"/>
</dbReference>
<dbReference type="GO" id="GO:0005198">
    <property type="term" value="F:structural molecule activity"/>
    <property type="evidence" value="ECO:0007669"/>
    <property type="project" value="UniProtKB-UniRule"/>
</dbReference>
<dbReference type="GO" id="GO:0075509">
    <property type="term" value="P:endocytosis involved in viral entry into host cell"/>
    <property type="evidence" value="ECO:0007669"/>
    <property type="project" value="UniProtKB-KW"/>
</dbReference>
<dbReference type="GO" id="GO:0019062">
    <property type="term" value="P:virion attachment to host cell"/>
    <property type="evidence" value="ECO:0007669"/>
    <property type="project" value="UniProtKB-UniRule"/>
</dbReference>
<dbReference type="Gene3D" id="2.60.175.20">
    <property type="entry name" value="Major capsid L1 (late) superfamily, Papillomavirus"/>
    <property type="match status" value="2"/>
</dbReference>
<dbReference type="HAMAP" id="MF_04002">
    <property type="entry name" value="PPV_L1"/>
    <property type="match status" value="1"/>
</dbReference>
<dbReference type="InterPro" id="IPR002210">
    <property type="entry name" value="Capsid_L1_Papillomavir"/>
</dbReference>
<dbReference type="InterPro" id="IPR036973">
    <property type="entry name" value="Capsid_L1_sf_Papillomavir"/>
</dbReference>
<dbReference type="InterPro" id="IPR011222">
    <property type="entry name" value="dsDNA_vir_gr_I_capsid"/>
</dbReference>
<dbReference type="Pfam" id="PF00500">
    <property type="entry name" value="Late_protein_L1"/>
    <property type="match status" value="1"/>
</dbReference>
<dbReference type="PRINTS" id="PR00865">
    <property type="entry name" value="HPVCAPSIDL1"/>
</dbReference>
<dbReference type="SUPFAM" id="SSF88648">
    <property type="entry name" value="Group I dsDNA viruses"/>
    <property type="match status" value="1"/>
</dbReference>
<evidence type="ECO:0000255" key="1">
    <source>
        <dbReference type="HAMAP-Rule" id="MF_04002"/>
    </source>
</evidence>
<evidence type="ECO:0000256" key="2">
    <source>
        <dbReference type="SAM" id="MobiDB-lite"/>
    </source>
</evidence>
<evidence type="ECO:0007829" key="3">
    <source>
        <dbReference type="PDB" id="6IGF"/>
    </source>
</evidence>
<protein>
    <recommendedName>
        <fullName evidence="1">Major capsid protein L1</fullName>
    </recommendedName>
</protein>
<feature type="chain" id="PRO_0000133535" description="Major capsid protein L1">
    <location>
        <begin position="1"/>
        <end position="529"/>
    </location>
</feature>
<feature type="region of interest" description="Disordered" evidence="2">
    <location>
        <begin position="507"/>
        <end position="529"/>
    </location>
</feature>
<feature type="disulfide bond" description="Interchain (with C-458)" evidence="1">
    <location>
        <position position="204"/>
    </location>
</feature>
<feature type="disulfide bond" description="Interchain (with C-204)" evidence="1">
    <location>
        <position position="458"/>
    </location>
</feature>
<feature type="helix" evidence="3">
    <location>
        <begin position="50"/>
        <end position="52"/>
    </location>
</feature>
<feature type="strand" evidence="3">
    <location>
        <begin position="55"/>
        <end position="64"/>
    </location>
</feature>
<feature type="strand" evidence="3">
    <location>
        <begin position="68"/>
        <end position="75"/>
    </location>
</feature>
<feature type="strand" evidence="3">
    <location>
        <begin position="82"/>
        <end position="84"/>
    </location>
</feature>
<feature type="strand" evidence="3">
    <location>
        <begin position="89"/>
        <end position="91"/>
    </location>
</feature>
<feature type="strand" evidence="3">
    <location>
        <begin position="100"/>
        <end position="105"/>
    </location>
</feature>
<feature type="helix" evidence="3">
    <location>
        <begin position="109"/>
        <end position="111"/>
    </location>
</feature>
<feature type="turn" evidence="3">
    <location>
        <begin position="122"/>
        <end position="124"/>
    </location>
</feature>
<feature type="strand" evidence="3">
    <location>
        <begin position="125"/>
        <end position="138"/>
    </location>
</feature>
<feature type="strand" evidence="3">
    <location>
        <begin position="146"/>
        <end position="152"/>
    </location>
</feature>
<feature type="strand" evidence="3">
    <location>
        <begin position="174"/>
        <end position="179"/>
    </location>
</feature>
<feature type="strand" evidence="3">
    <location>
        <begin position="182"/>
        <end position="191"/>
    </location>
</feature>
<feature type="strand" evidence="3">
    <location>
        <begin position="194"/>
        <end position="200"/>
    </location>
</feature>
<feature type="strand" evidence="3">
    <location>
        <begin position="217"/>
        <end position="223"/>
    </location>
</feature>
<feature type="strand" evidence="3">
    <location>
        <begin position="236"/>
        <end position="238"/>
    </location>
</feature>
<feature type="helix" evidence="3">
    <location>
        <begin position="239"/>
        <end position="242"/>
    </location>
</feature>
<feature type="turn" evidence="3">
    <location>
        <begin position="251"/>
        <end position="255"/>
    </location>
</feature>
<feature type="strand" evidence="3">
    <location>
        <begin position="256"/>
        <end position="261"/>
    </location>
</feature>
<feature type="helix" evidence="3">
    <location>
        <begin position="263"/>
        <end position="267"/>
    </location>
</feature>
<feature type="strand" evidence="3">
    <location>
        <begin position="276"/>
        <end position="291"/>
    </location>
</feature>
<feature type="strand" evidence="3">
    <location>
        <begin position="294"/>
        <end position="298"/>
    </location>
</feature>
<feature type="helix" evidence="3">
    <location>
        <begin position="302"/>
        <end position="304"/>
    </location>
</feature>
<feature type="strand" evidence="3">
    <location>
        <begin position="322"/>
        <end position="327"/>
    </location>
</feature>
<feature type="helix" evidence="3">
    <location>
        <begin position="333"/>
        <end position="335"/>
    </location>
</feature>
<feature type="strand" evidence="3">
    <location>
        <begin position="338"/>
        <end position="343"/>
    </location>
</feature>
<feature type="strand" evidence="3">
    <location>
        <begin position="348"/>
        <end position="350"/>
    </location>
</feature>
<feature type="helix" evidence="3">
    <location>
        <begin position="356"/>
        <end position="358"/>
    </location>
</feature>
<feature type="strand" evidence="3">
    <location>
        <begin position="359"/>
        <end position="366"/>
    </location>
</feature>
<feature type="strand" evidence="3">
    <location>
        <begin position="373"/>
        <end position="380"/>
    </location>
</feature>
<feature type="helix" evidence="3">
    <location>
        <begin position="387"/>
        <end position="389"/>
    </location>
</feature>
<feature type="strand" evidence="3">
    <location>
        <begin position="390"/>
        <end position="412"/>
    </location>
</feature>
<feature type="helix" evidence="3">
    <location>
        <begin position="415"/>
        <end position="424"/>
    </location>
</feature>
<feature type="helix" evidence="3">
    <location>
        <begin position="426"/>
        <end position="432"/>
    </location>
</feature>
<feature type="helix" evidence="3">
    <location>
        <begin position="470"/>
        <end position="473"/>
    </location>
</feature>
<feature type="strand" evidence="3">
    <location>
        <begin position="477"/>
        <end position="480"/>
    </location>
</feature>
<feature type="strand" evidence="3">
    <location>
        <begin position="485"/>
        <end position="487"/>
    </location>
</feature>
<feature type="helix" evidence="3">
    <location>
        <begin position="489"/>
        <end position="491"/>
    </location>
</feature>
<feature type="helix" evidence="3">
    <location>
        <begin position="493"/>
        <end position="501"/>
    </location>
</feature>
<name>VL1_HPV52</name>
<comment type="function">
    <text evidence="1">Forms an icosahedral capsid with a T=7 symmetry and a 50 nm diameter. The capsid is composed of 72 pentamers linked to each other by disulfide bonds and associated with L2 proteins. Binds to heparan sulfate proteoglycans on cell surface of basal layer keratinocytes to provide initial virion attachment. This binding mediates a conformational change in the virus capsid that facilitates efficient infection. The virion enters the host cell via endocytosis. During virus trafficking, L1 protein dissociates from the viral DNA and the genomic DNA is released to the host nucleus. The virion assembly takes place within the cell nucleus. Encapsulates the genomic DNA together with protein L2.</text>
</comment>
<comment type="subunit">
    <text evidence="1">Self-assembles into homopentamers. The capsid has an icosahedral symmetry and consists of 72 capsomers, with each capsomer being a pentamer of L1. Interacts with the minor capsid protein L2; this interaction is necessary for viral genome encapsidation. Interacts with protein E2; this interaction enhances E2-dependent replication and transcription activation.</text>
</comment>
<comment type="subcellular location">
    <subcellularLocation>
        <location evidence="1">Virion</location>
    </subcellularLocation>
    <subcellularLocation>
        <location evidence="1">Host nucleus</location>
    </subcellularLocation>
</comment>
<comment type="similarity">
    <text evidence="1">Belongs to the papillomaviridae L1 protein family.</text>
</comment>
<keyword id="KW-0002">3D-structure</keyword>
<keyword id="KW-0167">Capsid protein</keyword>
<keyword id="KW-1015">Disulfide bond</keyword>
<keyword id="KW-1048">Host nucleus</keyword>
<keyword id="KW-0945">Host-virus interaction</keyword>
<keyword id="KW-0426">Late protein</keyword>
<keyword id="KW-1145">T=7 icosahedral capsid protein</keyword>
<keyword id="KW-1161">Viral attachment to host cell</keyword>
<keyword id="KW-1162">Viral penetration into host cytoplasm</keyword>
<keyword id="KW-0946">Virion</keyword>
<keyword id="KW-1164">Virus endocytosis by host</keyword>
<keyword id="KW-1160">Virus entry into host cell</keyword>
<gene>
    <name evidence="1" type="primary">L1</name>
</gene>
<organism>
    <name type="scientific">Human papillomavirus 52</name>
    <dbReference type="NCBI Taxonomy" id="10618"/>
    <lineage>
        <taxon>Viruses</taxon>
        <taxon>Monodnaviria</taxon>
        <taxon>Shotokuvirae</taxon>
        <taxon>Cossaviricota</taxon>
        <taxon>Papovaviricetes</taxon>
        <taxon>Zurhausenvirales</taxon>
        <taxon>Papillomaviridae</taxon>
        <taxon>Firstpapillomavirinae</taxon>
        <taxon>Alphapapillomavirus</taxon>
        <taxon>Alphapapillomavirus 9</taxon>
    </lineage>
</organism>
<sequence length="529" mass="59469">MVQILFYILVIFYYVAGVNVFHIFLQMSVWRPSEATVYLPPVPVSKVVSTDEYVSRTSIYYYAGSSRLLTVGHPYFSIKNTSSGNGKKVLVPKVSGLQYRVFRIKLPDPNKFGFPDTSFYNPETQRLVWACTGLEIGRGQPLGVGISGHPLLNKFDDTETSNKYAGKPGIDNRECLSMDYKQTQLCILGCKPPIGEHWGKGTPCNNNSGNPGDCPPLQLINSVIQDGDMVDTGFGCMDFNTLQASKSDVPIDICSSVCKYPDYLQMASEPYGDSLFFFLRREQMFVRHFFNRAGTLGDPVPGDLYIQGSNSGNTATVQSSAFFPTPSGSMVTSESQLFNKPYWLQRAQGHNNGICWGNQLFVTVVDTTRSTNMTLCAEVKKESTYKNENFKEYLRHGEEFDLQFIFQLCKITLTADVMTYIHKMDATILEDWQFGLTPPPSASLEDTYRFVTSTAITCQKNTPPKGKEDPLKDYMFWEVDLKEKFSADLDQFPLGRKFLLQAGLQARPKLKRPASSAPRTSTKKKKVKR</sequence>
<organismHost>
    <name type="scientific">Homo sapiens</name>
    <name type="common">Human</name>
    <dbReference type="NCBI Taxonomy" id="9606"/>
</organismHost>